<gene>
    <name evidence="1" type="primary">rplY</name>
    <name type="ordered locus">FTW_1053</name>
</gene>
<name>RL25_FRATW</name>
<reference key="1">
    <citation type="journal article" date="2007" name="PLoS ONE">
        <title>Complete genomic characterization of a pathogenic A.II strain of Francisella tularensis subspecies tularensis.</title>
        <authorList>
            <person name="Beckstrom-Sternberg S.M."/>
            <person name="Auerbach R.K."/>
            <person name="Godbole S."/>
            <person name="Pearson J.V."/>
            <person name="Beckstrom-Sternberg J.S."/>
            <person name="Deng Z."/>
            <person name="Munk C."/>
            <person name="Kubota K."/>
            <person name="Zhou Y."/>
            <person name="Bruce D."/>
            <person name="Noronha J."/>
            <person name="Scheuermann R.H."/>
            <person name="Wang A."/>
            <person name="Wei X."/>
            <person name="Wang J."/>
            <person name="Hao J."/>
            <person name="Wagner D.M."/>
            <person name="Brettin T.S."/>
            <person name="Brown N."/>
            <person name="Gilna P."/>
            <person name="Keim P.S."/>
        </authorList>
    </citation>
    <scope>NUCLEOTIDE SEQUENCE [LARGE SCALE GENOMIC DNA]</scope>
    <source>
        <strain>WY96-3418</strain>
    </source>
</reference>
<accession>A4IY68</accession>
<comment type="function">
    <text evidence="1">This is one of the proteins that binds to the 5S RNA in the ribosome where it forms part of the central protuberance.</text>
</comment>
<comment type="subunit">
    <text evidence="1">Part of the 50S ribosomal subunit; part of the 5S rRNA/L5/L18/L25 subcomplex. Contacts the 5S rRNA. Binds to the 5S rRNA independently of L5 and L18.</text>
</comment>
<comment type="similarity">
    <text evidence="1">Belongs to the bacterial ribosomal protein bL25 family.</text>
</comment>
<feature type="chain" id="PRO_1000052956" description="Large ribosomal subunit protein bL25">
    <location>
        <begin position="1"/>
        <end position="96"/>
    </location>
</feature>
<evidence type="ECO:0000255" key="1">
    <source>
        <dbReference type="HAMAP-Rule" id="MF_01336"/>
    </source>
</evidence>
<evidence type="ECO:0000305" key="2"/>
<dbReference type="EMBL" id="CP000608">
    <property type="protein sequence ID" value="ABO46869.1"/>
    <property type="molecule type" value="Genomic_DNA"/>
</dbReference>
<dbReference type="RefSeq" id="WP_003018840.1">
    <property type="nucleotide sequence ID" value="NC_009257.1"/>
</dbReference>
<dbReference type="SMR" id="A4IY68"/>
<dbReference type="GeneID" id="75265258"/>
<dbReference type="KEGG" id="ftw:FTW_1053"/>
<dbReference type="HOGENOM" id="CLU_137946_0_0_6"/>
<dbReference type="GO" id="GO:0022625">
    <property type="term" value="C:cytosolic large ribosomal subunit"/>
    <property type="evidence" value="ECO:0007669"/>
    <property type="project" value="TreeGrafter"/>
</dbReference>
<dbReference type="GO" id="GO:0008097">
    <property type="term" value="F:5S rRNA binding"/>
    <property type="evidence" value="ECO:0007669"/>
    <property type="project" value="InterPro"/>
</dbReference>
<dbReference type="GO" id="GO:0003735">
    <property type="term" value="F:structural constituent of ribosome"/>
    <property type="evidence" value="ECO:0007669"/>
    <property type="project" value="InterPro"/>
</dbReference>
<dbReference type="GO" id="GO:0006412">
    <property type="term" value="P:translation"/>
    <property type="evidence" value="ECO:0007669"/>
    <property type="project" value="UniProtKB-UniRule"/>
</dbReference>
<dbReference type="CDD" id="cd00495">
    <property type="entry name" value="Ribosomal_L25_TL5_CTC"/>
    <property type="match status" value="1"/>
</dbReference>
<dbReference type="FunFam" id="2.40.240.10:FF:000002">
    <property type="entry name" value="50S ribosomal protein L25"/>
    <property type="match status" value="1"/>
</dbReference>
<dbReference type="Gene3D" id="2.40.240.10">
    <property type="entry name" value="Ribosomal Protein L25, Chain P"/>
    <property type="match status" value="1"/>
</dbReference>
<dbReference type="HAMAP" id="MF_01336">
    <property type="entry name" value="Ribosomal_bL25"/>
    <property type="match status" value="1"/>
</dbReference>
<dbReference type="InterPro" id="IPR020056">
    <property type="entry name" value="Rbsml_bL25/Gln-tRNA_synth_N"/>
</dbReference>
<dbReference type="InterPro" id="IPR011035">
    <property type="entry name" value="Ribosomal_bL25/Gln-tRNA_synth"/>
</dbReference>
<dbReference type="InterPro" id="IPR001021">
    <property type="entry name" value="Ribosomal_bL25_long"/>
</dbReference>
<dbReference type="InterPro" id="IPR020055">
    <property type="entry name" value="Ribosomal_bL25_short"/>
</dbReference>
<dbReference type="InterPro" id="IPR029751">
    <property type="entry name" value="Ribosomal_L25_dom"/>
</dbReference>
<dbReference type="InterPro" id="IPR020930">
    <property type="entry name" value="Ribosomal_uL5_bac-type"/>
</dbReference>
<dbReference type="NCBIfam" id="TIGR00731">
    <property type="entry name" value="bL25_bact_ctc"/>
    <property type="match status" value="1"/>
</dbReference>
<dbReference type="NCBIfam" id="NF004612">
    <property type="entry name" value="PRK05943.1"/>
    <property type="match status" value="1"/>
</dbReference>
<dbReference type="PANTHER" id="PTHR33284">
    <property type="entry name" value="RIBOSOMAL PROTEIN L25/GLN-TRNA SYNTHETASE, ANTI-CODON-BINDING DOMAIN-CONTAINING PROTEIN"/>
    <property type="match status" value="1"/>
</dbReference>
<dbReference type="PANTHER" id="PTHR33284:SF1">
    <property type="entry name" value="RIBOSOMAL PROTEIN L25_GLN-TRNA SYNTHETASE, ANTI-CODON-BINDING DOMAIN-CONTAINING PROTEIN"/>
    <property type="match status" value="1"/>
</dbReference>
<dbReference type="Pfam" id="PF01386">
    <property type="entry name" value="Ribosomal_L25p"/>
    <property type="match status" value="1"/>
</dbReference>
<dbReference type="SUPFAM" id="SSF50715">
    <property type="entry name" value="Ribosomal protein L25-like"/>
    <property type="match status" value="1"/>
</dbReference>
<protein>
    <recommendedName>
        <fullName evidence="1">Large ribosomal subunit protein bL25</fullName>
    </recommendedName>
    <alternativeName>
        <fullName evidence="2">50S ribosomal protein L25</fullName>
    </alternativeName>
</protein>
<organism>
    <name type="scientific">Francisella tularensis subsp. tularensis (strain WY96-3418)</name>
    <dbReference type="NCBI Taxonomy" id="418136"/>
    <lineage>
        <taxon>Bacteria</taxon>
        <taxon>Pseudomonadati</taxon>
        <taxon>Pseudomonadota</taxon>
        <taxon>Gammaproteobacteria</taxon>
        <taxon>Thiotrichales</taxon>
        <taxon>Francisellaceae</taxon>
        <taxon>Francisella</taxon>
    </lineage>
</organism>
<proteinExistence type="inferred from homology"/>
<keyword id="KW-0687">Ribonucleoprotein</keyword>
<keyword id="KW-0689">Ribosomal protein</keyword>
<keyword id="KW-0694">RNA-binding</keyword>
<keyword id="KW-0699">rRNA-binding</keyword>
<sequence length="96" mass="10846">MANFVLKAEKREDLGTGASRRLRRAGKIPAVIYGGEKEAVSVLLDHDKVLHSTEDKAFFSSEITLDIDGKQEKVIIKALQRHPYKVKLIHADFMRV</sequence>